<sequence length="432" mass="49804">MAISGFKGTLKLKPLKTPVFYKRDKDFRGYFSGHLQHKETKLSPAQLEAFRNAYNFFTKDRTGCIDSHGLMSTVAKLGMNLNAYDIYNELKCADRDRDGKINFSDFIDVLTDKKLFLKAVVPEKRICLDLANNPGILLFEILSKFVEISALHRKDIIELVSYFRKKFQESNSEILWSPYGRRAFKTDICSPPRSSTAAFANSARISIMKERDLYKFLEALKRCNLRTDSPYSKIPVFPLFPDVDGVVLGKPFKDTQKLEMLRKREPLSFFEDYFFNKRDWKTQAMNVKPLKSASGYSDDILAIDQLFKKKQHWTVSDAVALKQHVKRATDTYHLGIALDHRKEMLNLWKKIRGDLVGLESNNESFYNTFSTYTWSWNVCQELLSAKDLRLHDANVNKTSPSNSGLSSPSDLSESDPETGRKRKRKSSRGFRQ</sequence>
<evidence type="ECO:0000255" key="1">
    <source>
        <dbReference type="PROSITE-ProRule" id="PRU00448"/>
    </source>
</evidence>
<evidence type="ECO:0000256" key="2">
    <source>
        <dbReference type="SAM" id="MobiDB-lite"/>
    </source>
</evidence>
<evidence type="ECO:0007744" key="3">
    <source>
    </source>
</evidence>
<feature type="chain" id="PRO_0000253549" description="EF-hand calcium-binding domain-containing protein 3">
    <location>
        <begin position="1"/>
        <end position="432"/>
    </location>
</feature>
<feature type="domain" description="EF-hand 1" evidence="1">
    <location>
        <begin position="45"/>
        <end position="80"/>
    </location>
</feature>
<feature type="domain" description="EF-hand 2" evidence="1">
    <location>
        <begin position="81"/>
        <end position="116"/>
    </location>
</feature>
<feature type="region of interest" description="Disordered" evidence="2">
    <location>
        <begin position="394"/>
        <end position="432"/>
    </location>
</feature>
<feature type="compositionally biased region" description="Low complexity" evidence="2">
    <location>
        <begin position="399"/>
        <end position="411"/>
    </location>
</feature>
<feature type="compositionally biased region" description="Basic residues" evidence="2">
    <location>
        <begin position="420"/>
        <end position="432"/>
    </location>
</feature>
<feature type="binding site" evidence="1">
    <location>
        <position position="94"/>
    </location>
    <ligand>
        <name>Ca(2+)</name>
        <dbReference type="ChEBI" id="CHEBI:29108"/>
    </ligand>
</feature>
<feature type="binding site" evidence="1">
    <location>
        <position position="96"/>
    </location>
    <ligand>
        <name>Ca(2+)</name>
        <dbReference type="ChEBI" id="CHEBI:29108"/>
    </ligand>
</feature>
<feature type="binding site" evidence="1">
    <location>
        <position position="98"/>
    </location>
    <ligand>
        <name>Ca(2+)</name>
        <dbReference type="ChEBI" id="CHEBI:29108"/>
    </ligand>
</feature>
<feature type="binding site" evidence="1">
    <location>
        <position position="100"/>
    </location>
    <ligand>
        <name>Ca(2+)</name>
        <dbReference type="ChEBI" id="CHEBI:29108"/>
    </ligand>
</feature>
<feature type="binding site" evidence="1">
    <location>
        <position position="105"/>
    </location>
    <ligand>
        <name>Ca(2+)</name>
        <dbReference type="ChEBI" id="CHEBI:29108"/>
    </ligand>
</feature>
<feature type="modified residue" description="Phosphotyrosine" evidence="3">
    <location>
        <position position="273"/>
    </location>
</feature>
<organism>
    <name type="scientific">Rattus norvegicus</name>
    <name type="common">Rat</name>
    <dbReference type="NCBI Taxonomy" id="10116"/>
    <lineage>
        <taxon>Eukaryota</taxon>
        <taxon>Metazoa</taxon>
        <taxon>Chordata</taxon>
        <taxon>Craniata</taxon>
        <taxon>Vertebrata</taxon>
        <taxon>Euteleostomi</taxon>
        <taxon>Mammalia</taxon>
        <taxon>Eutheria</taxon>
        <taxon>Euarchontoglires</taxon>
        <taxon>Glires</taxon>
        <taxon>Rodentia</taxon>
        <taxon>Myomorpha</taxon>
        <taxon>Muroidea</taxon>
        <taxon>Muridae</taxon>
        <taxon>Murinae</taxon>
        <taxon>Rattus</taxon>
    </lineage>
</organism>
<accession>Q66HC0</accession>
<accession>A0JPN9</accession>
<dbReference type="EMBL" id="BC081930">
    <property type="protein sequence ID" value="AAH81930.1"/>
    <property type="molecule type" value="mRNA"/>
</dbReference>
<dbReference type="EMBL" id="BC127522">
    <property type="protein sequence ID" value="AAI27523.1"/>
    <property type="molecule type" value="mRNA"/>
</dbReference>
<dbReference type="RefSeq" id="NP_001013994.1">
    <property type="nucleotide sequence ID" value="NM_001013972.3"/>
</dbReference>
<dbReference type="RefSeq" id="XP_063125253.1">
    <property type="nucleotide sequence ID" value="XM_063269183.1"/>
</dbReference>
<dbReference type="SMR" id="Q66HC0"/>
<dbReference type="FunCoup" id="Q66HC0">
    <property type="interactions" value="2"/>
</dbReference>
<dbReference type="STRING" id="10116.ENSRNOP00000008019"/>
<dbReference type="CarbonylDB" id="Q66HC0"/>
<dbReference type="iPTMnet" id="Q66HC0"/>
<dbReference type="PhosphoSitePlus" id="Q66HC0"/>
<dbReference type="PaxDb" id="10116-ENSRNOP00000008019"/>
<dbReference type="GeneID" id="303589"/>
<dbReference type="KEGG" id="rno:303589"/>
<dbReference type="UCSC" id="RGD:1305423">
    <property type="organism name" value="rat"/>
</dbReference>
<dbReference type="AGR" id="RGD:1305423"/>
<dbReference type="CTD" id="146779"/>
<dbReference type="RGD" id="1305423">
    <property type="gene designation" value="Efcab3"/>
</dbReference>
<dbReference type="eggNOG" id="KOG0027">
    <property type="taxonomic scope" value="Eukaryota"/>
</dbReference>
<dbReference type="InParanoid" id="Q66HC0"/>
<dbReference type="OrthoDB" id="77490at9989"/>
<dbReference type="PhylomeDB" id="Q66HC0"/>
<dbReference type="PRO" id="PR:Q66HC0"/>
<dbReference type="Proteomes" id="UP000002494">
    <property type="component" value="Unplaced"/>
</dbReference>
<dbReference type="GO" id="GO:0005509">
    <property type="term" value="F:calcium ion binding"/>
    <property type="evidence" value="ECO:0007669"/>
    <property type="project" value="InterPro"/>
</dbReference>
<dbReference type="Gene3D" id="1.10.238.10">
    <property type="entry name" value="EF-hand"/>
    <property type="match status" value="1"/>
</dbReference>
<dbReference type="InterPro" id="IPR011992">
    <property type="entry name" value="EF-hand-dom_pair"/>
</dbReference>
<dbReference type="InterPro" id="IPR018247">
    <property type="entry name" value="EF_Hand_1_Ca_BS"/>
</dbReference>
<dbReference type="InterPro" id="IPR002048">
    <property type="entry name" value="EF_hand_dom"/>
</dbReference>
<dbReference type="PANTHER" id="PTHR22656">
    <property type="entry name" value="EF-HAND CALCIUM-BINDING DOMAIN-CONTAINING PROTEIN 13"/>
    <property type="match status" value="1"/>
</dbReference>
<dbReference type="PANTHER" id="PTHR22656:SF1">
    <property type="entry name" value="EF-HAND CALCIUM-BINDING DOMAIN-CONTAINING PROTEIN 13"/>
    <property type="match status" value="1"/>
</dbReference>
<dbReference type="Pfam" id="PF13833">
    <property type="entry name" value="EF-hand_8"/>
    <property type="match status" value="1"/>
</dbReference>
<dbReference type="SUPFAM" id="SSF47473">
    <property type="entry name" value="EF-hand"/>
    <property type="match status" value="1"/>
</dbReference>
<dbReference type="PROSITE" id="PS00018">
    <property type="entry name" value="EF_HAND_1"/>
    <property type="match status" value="1"/>
</dbReference>
<dbReference type="PROSITE" id="PS50222">
    <property type="entry name" value="EF_HAND_2"/>
    <property type="match status" value="2"/>
</dbReference>
<proteinExistence type="evidence at protein level"/>
<reference key="1">
    <citation type="journal article" date="2004" name="Genome Res.">
        <title>The status, quality, and expansion of the NIH full-length cDNA project: the Mammalian Gene Collection (MGC).</title>
        <authorList>
            <consortium name="The MGC Project Team"/>
        </authorList>
    </citation>
    <scope>NUCLEOTIDE SEQUENCE [LARGE SCALE MRNA]</scope>
    <source>
        <tissue>Testis</tissue>
    </source>
</reference>
<reference key="2">
    <citation type="journal article" date="2012" name="Nat. Commun.">
        <title>Quantitative maps of protein phosphorylation sites across 14 different rat organs and tissues.</title>
        <authorList>
            <person name="Lundby A."/>
            <person name="Secher A."/>
            <person name="Lage K."/>
            <person name="Nordsborg N.B."/>
            <person name="Dmytriyev A."/>
            <person name="Lundby C."/>
            <person name="Olsen J.V."/>
        </authorList>
    </citation>
    <scope>PHOSPHORYLATION [LARGE SCALE ANALYSIS] AT TYR-273</scope>
    <scope>IDENTIFICATION BY MASS SPECTROMETRY [LARGE SCALE ANALYSIS]</scope>
</reference>
<name>EFCB3_RAT</name>
<gene>
    <name type="primary">Efcab3</name>
</gene>
<protein>
    <recommendedName>
        <fullName>EF-hand calcium-binding domain-containing protein 3</fullName>
    </recommendedName>
</protein>
<keyword id="KW-0106">Calcium</keyword>
<keyword id="KW-0479">Metal-binding</keyword>
<keyword id="KW-0597">Phosphoprotein</keyword>
<keyword id="KW-1185">Reference proteome</keyword>
<keyword id="KW-0677">Repeat</keyword>